<feature type="chain" id="PRO_1000091919" description="DNA-directed RNA polymerase subunit alpha">
    <location>
        <begin position="1"/>
        <end position="335"/>
    </location>
</feature>
<feature type="region of interest" description="Alpha N-terminal domain (alpha-NTD)" evidence="1">
    <location>
        <begin position="1"/>
        <end position="233"/>
    </location>
</feature>
<feature type="region of interest" description="Alpha C-terminal domain (alpha-CTD)" evidence="1">
    <location>
        <begin position="247"/>
        <end position="335"/>
    </location>
</feature>
<protein>
    <recommendedName>
        <fullName evidence="1">DNA-directed RNA polymerase subunit alpha</fullName>
        <shortName evidence="1">RNAP subunit alpha</shortName>
        <ecNumber evidence="1">2.7.7.6</ecNumber>
    </recommendedName>
    <alternativeName>
        <fullName evidence="1">RNA polymerase subunit alpha</fullName>
    </alternativeName>
    <alternativeName>
        <fullName evidence="1">Transcriptase subunit alpha</fullName>
    </alternativeName>
</protein>
<gene>
    <name evidence="1" type="primary">rpoA</name>
    <name type="ordered locus">ABSDF0448</name>
</gene>
<dbReference type="EC" id="2.7.7.6" evidence="1"/>
<dbReference type="EMBL" id="CU468230">
    <property type="protein sequence ID" value="CAO99839.1"/>
    <property type="molecule type" value="Genomic_DNA"/>
</dbReference>
<dbReference type="SMR" id="B0VQU3"/>
<dbReference type="KEGG" id="abm:ABSDF0448"/>
<dbReference type="HOGENOM" id="CLU_053084_0_0_6"/>
<dbReference type="Proteomes" id="UP000001741">
    <property type="component" value="Chromosome"/>
</dbReference>
<dbReference type="GO" id="GO:0005737">
    <property type="term" value="C:cytoplasm"/>
    <property type="evidence" value="ECO:0007669"/>
    <property type="project" value="UniProtKB-ARBA"/>
</dbReference>
<dbReference type="GO" id="GO:0000428">
    <property type="term" value="C:DNA-directed RNA polymerase complex"/>
    <property type="evidence" value="ECO:0007669"/>
    <property type="project" value="UniProtKB-KW"/>
</dbReference>
<dbReference type="GO" id="GO:0003677">
    <property type="term" value="F:DNA binding"/>
    <property type="evidence" value="ECO:0007669"/>
    <property type="project" value="UniProtKB-UniRule"/>
</dbReference>
<dbReference type="GO" id="GO:0003899">
    <property type="term" value="F:DNA-directed RNA polymerase activity"/>
    <property type="evidence" value="ECO:0007669"/>
    <property type="project" value="UniProtKB-UniRule"/>
</dbReference>
<dbReference type="GO" id="GO:0046983">
    <property type="term" value="F:protein dimerization activity"/>
    <property type="evidence" value="ECO:0007669"/>
    <property type="project" value="InterPro"/>
</dbReference>
<dbReference type="GO" id="GO:0006351">
    <property type="term" value="P:DNA-templated transcription"/>
    <property type="evidence" value="ECO:0007669"/>
    <property type="project" value="UniProtKB-UniRule"/>
</dbReference>
<dbReference type="CDD" id="cd06928">
    <property type="entry name" value="RNAP_alpha_NTD"/>
    <property type="match status" value="1"/>
</dbReference>
<dbReference type="FunFam" id="1.10.150.20:FF:000001">
    <property type="entry name" value="DNA-directed RNA polymerase subunit alpha"/>
    <property type="match status" value="1"/>
</dbReference>
<dbReference type="FunFam" id="2.170.120.12:FF:000001">
    <property type="entry name" value="DNA-directed RNA polymerase subunit alpha"/>
    <property type="match status" value="1"/>
</dbReference>
<dbReference type="Gene3D" id="1.10.150.20">
    <property type="entry name" value="5' to 3' exonuclease, C-terminal subdomain"/>
    <property type="match status" value="1"/>
</dbReference>
<dbReference type="Gene3D" id="2.170.120.12">
    <property type="entry name" value="DNA-directed RNA polymerase, insert domain"/>
    <property type="match status" value="1"/>
</dbReference>
<dbReference type="Gene3D" id="3.30.1360.10">
    <property type="entry name" value="RNA polymerase, RBP11-like subunit"/>
    <property type="match status" value="1"/>
</dbReference>
<dbReference type="HAMAP" id="MF_00059">
    <property type="entry name" value="RNApol_bact_RpoA"/>
    <property type="match status" value="1"/>
</dbReference>
<dbReference type="InterPro" id="IPR011262">
    <property type="entry name" value="DNA-dir_RNA_pol_insert"/>
</dbReference>
<dbReference type="InterPro" id="IPR011263">
    <property type="entry name" value="DNA-dir_RNA_pol_RpoA/D/Rpb3"/>
</dbReference>
<dbReference type="InterPro" id="IPR011773">
    <property type="entry name" value="DNA-dir_RpoA"/>
</dbReference>
<dbReference type="InterPro" id="IPR036603">
    <property type="entry name" value="RBP11-like"/>
</dbReference>
<dbReference type="InterPro" id="IPR011260">
    <property type="entry name" value="RNAP_asu_C"/>
</dbReference>
<dbReference type="InterPro" id="IPR036643">
    <property type="entry name" value="RNApol_insert_sf"/>
</dbReference>
<dbReference type="NCBIfam" id="NF003513">
    <property type="entry name" value="PRK05182.1-2"/>
    <property type="match status" value="1"/>
</dbReference>
<dbReference type="NCBIfam" id="NF003519">
    <property type="entry name" value="PRK05182.2-5"/>
    <property type="match status" value="1"/>
</dbReference>
<dbReference type="NCBIfam" id="TIGR02027">
    <property type="entry name" value="rpoA"/>
    <property type="match status" value="1"/>
</dbReference>
<dbReference type="Pfam" id="PF01000">
    <property type="entry name" value="RNA_pol_A_bac"/>
    <property type="match status" value="1"/>
</dbReference>
<dbReference type="Pfam" id="PF03118">
    <property type="entry name" value="RNA_pol_A_CTD"/>
    <property type="match status" value="1"/>
</dbReference>
<dbReference type="Pfam" id="PF01193">
    <property type="entry name" value="RNA_pol_L"/>
    <property type="match status" value="1"/>
</dbReference>
<dbReference type="SMART" id="SM00662">
    <property type="entry name" value="RPOLD"/>
    <property type="match status" value="1"/>
</dbReference>
<dbReference type="SUPFAM" id="SSF47789">
    <property type="entry name" value="C-terminal domain of RNA polymerase alpha subunit"/>
    <property type="match status" value="1"/>
</dbReference>
<dbReference type="SUPFAM" id="SSF56553">
    <property type="entry name" value="Insert subdomain of RNA polymerase alpha subunit"/>
    <property type="match status" value="1"/>
</dbReference>
<dbReference type="SUPFAM" id="SSF55257">
    <property type="entry name" value="RBP11-like subunits of RNA polymerase"/>
    <property type="match status" value="1"/>
</dbReference>
<evidence type="ECO:0000255" key="1">
    <source>
        <dbReference type="HAMAP-Rule" id="MF_00059"/>
    </source>
</evidence>
<sequence>MTRTANEFLTPQAIKVEAVSGTSAKVILEPLERGFGHTLGNALRRILLSSLPGAAVVEVEIEGVEHEYSTLEGLQQDIVELLLNLKGLSIKLFDQNEAYLTLEKQGPGDITAADLRLPHNVEVVNPEHLIGTLSATGSLKMRLKVSQGRGYETSDSRFPEGETRPVGRLQLDASYSPIKRVSYTVENARVEQRTDLDKLVIDLETNGTVDPEEAIRKAATILQQQIAIFVDLQKDQTPVAQEPREEVDPILLRPVDDLELTVRSANCLKAENIYYIGDLVQRTEVELLKTPNLGKKSLTEIKDVLASKGLQLGMRLENWPPASLRMDDRFAYRSR</sequence>
<accession>B0VQU3</accession>
<proteinExistence type="inferred from homology"/>
<comment type="function">
    <text evidence="1">DNA-dependent RNA polymerase catalyzes the transcription of DNA into RNA using the four ribonucleoside triphosphates as substrates.</text>
</comment>
<comment type="catalytic activity">
    <reaction evidence="1">
        <text>RNA(n) + a ribonucleoside 5'-triphosphate = RNA(n+1) + diphosphate</text>
        <dbReference type="Rhea" id="RHEA:21248"/>
        <dbReference type="Rhea" id="RHEA-COMP:14527"/>
        <dbReference type="Rhea" id="RHEA-COMP:17342"/>
        <dbReference type="ChEBI" id="CHEBI:33019"/>
        <dbReference type="ChEBI" id="CHEBI:61557"/>
        <dbReference type="ChEBI" id="CHEBI:140395"/>
        <dbReference type="EC" id="2.7.7.6"/>
    </reaction>
</comment>
<comment type="subunit">
    <text evidence="1">Homodimer. The RNAP catalytic core consists of 2 alpha, 1 beta, 1 beta' and 1 omega subunit. When a sigma factor is associated with the core the holoenzyme is formed, which can initiate transcription.</text>
</comment>
<comment type="domain">
    <text evidence="1">The N-terminal domain is essential for RNAP assembly and basal transcription, whereas the C-terminal domain is involved in interaction with transcriptional regulators and with upstream promoter elements.</text>
</comment>
<comment type="similarity">
    <text evidence="1">Belongs to the RNA polymerase alpha chain family.</text>
</comment>
<reference key="1">
    <citation type="journal article" date="2008" name="PLoS ONE">
        <title>Comparative analysis of Acinetobacters: three genomes for three lifestyles.</title>
        <authorList>
            <person name="Vallenet D."/>
            <person name="Nordmann P."/>
            <person name="Barbe V."/>
            <person name="Poirel L."/>
            <person name="Mangenot S."/>
            <person name="Bataille E."/>
            <person name="Dossat C."/>
            <person name="Gas S."/>
            <person name="Kreimeyer A."/>
            <person name="Lenoble P."/>
            <person name="Oztas S."/>
            <person name="Poulain J."/>
            <person name="Segurens B."/>
            <person name="Robert C."/>
            <person name="Abergel C."/>
            <person name="Claverie J.-M."/>
            <person name="Raoult D."/>
            <person name="Medigue C."/>
            <person name="Weissenbach J."/>
            <person name="Cruveiller S."/>
        </authorList>
    </citation>
    <scope>NUCLEOTIDE SEQUENCE [LARGE SCALE GENOMIC DNA]</scope>
    <source>
        <strain>SDF</strain>
    </source>
</reference>
<organism>
    <name type="scientific">Acinetobacter baumannii (strain SDF)</name>
    <dbReference type="NCBI Taxonomy" id="509170"/>
    <lineage>
        <taxon>Bacteria</taxon>
        <taxon>Pseudomonadati</taxon>
        <taxon>Pseudomonadota</taxon>
        <taxon>Gammaproteobacteria</taxon>
        <taxon>Moraxellales</taxon>
        <taxon>Moraxellaceae</taxon>
        <taxon>Acinetobacter</taxon>
        <taxon>Acinetobacter calcoaceticus/baumannii complex</taxon>
    </lineage>
</organism>
<keyword id="KW-0240">DNA-directed RNA polymerase</keyword>
<keyword id="KW-0548">Nucleotidyltransferase</keyword>
<keyword id="KW-0804">Transcription</keyword>
<keyword id="KW-0808">Transferase</keyword>
<name>RPOA_ACIBS</name>